<feature type="chain" id="PRO_0000091036" description="Elongation factor 2">
    <location>
        <begin position="1"/>
        <end position="730"/>
    </location>
</feature>
<feature type="domain" description="tr-type G">
    <location>
        <begin position="19"/>
        <end position="260"/>
    </location>
</feature>
<feature type="binding site" evidence="1">
    <location>
        <begin position="28"/>
        <end position="35"/>
    </location>
    <ligand>
        <name>GTP</name>
        <dbReference type="ChEBI" id="CHEBI:37565"/>
    </ligand>
</feature>
<feature type="binding site" evidence="1">
    <location>
        <begin position="94"/>
        <end position="98"/>
    </location>
    <ligand>
        <name>GTP</name>
        <dbReference type="ChEBI" id="CHEBI:37565"/>
    </ligand>
</feature>
<feature type="binding site" evidence="1">
    <location>
        <begin position="148"/>
        <end position="151"/>
    </location>
    <ligand>
        <name>GTP</name>
        <dbReference type="ChEBI" id="CHEBI:37565"/>
    </ligand>
</feature>
<feature type="modified residue" description="Diphthamide" evidence="1">
    <location>
        <position position="596"/>
    </location>
</feature>
<sequence length="730" mass="80565">MGRRKKMVERVTTLMNEPEKIRNIGIVAHIDHGKTTLSDNLLAGAGMISKELAGRQLFMDSDEEEQERGITIDASNVSMVHTYNNEDYLINLIDTPGHVDFGGDVTRAMRAVDGAVVVVDAVEGTMPQTETVLRQALREHVRPVLFVNKVDRLINELQVDSQEMQVRLGKVIDHVNKLIKNMNPEKFKAGWKVDAAAGTVAFGSALYNWAISVPMMQKTGISFTNVYDYCKAEDMKALAEKCPLHATVLDMVIRFLPNPLEAQKGRVPTIWHGDANSEIGKSMASANADGDLAFMVTDISIDPHAGEVATGRLFSGSFSRGMEVYISGTARKSRVQQVGIFMGPERLEVEKIPAGNIAAVTGLKDAIVGSTVTTLDGMTPFESIRHVSEPVVTVAVEAKHTKDLPKLVEVLRQVAKEDPTLQITLDEETGEHLMAGMGELHLEVIAHRIQRDKNVEITTSKPIVVYRETIKKKIEPVEGKSPNRHNRFYIYVEPLDTAIVEMIKSGDISMNLPELERRQKLIELGMGKEEAKGIVGIHNSNIFIDITKGIQYLNETMELILDGFEEVMRAGPLTREPVANMKCVLVDAKLHEDAIHRGPAQVIPAARQAIQAGMLMAEDCLLEPYQKVFVQVPQLTMGGATKELQGRRGIILNMTTEGDLAIIEARVPVAEMFGFAGEIRSATEGRAMWSTEFGGFDIVPTSIQTEVVGQIRERKGLKRDLPKASDYLSM</sequence>
<evidence type="ECO:0000250" key="1"/>
<evidence type="ECO:0000305" key="2"/>
<keyword id="KW-0963">Cytoplasm</keyword>
<keyword id="KW-0251">Elongation factor</keyword>
<keyword id="KW-0342">GTP-binding</keyword>
<keyword id="KW-0547">Nucleotide-binding</keyword>
<keyword id="KW-0648">Protein biosynthesis</keyword>
<organism>
    <name type="scientific">Methanosarcina thermophila</name>
    <dbReference type="NCBI Taxonomy" id="2210"/>
    <lineage>
        <taxon>Archaea</taxon>
        <taxon>Methanobacteriati</taxon>
        <taxon>Methanobacteriota</taxon>
        <taxon>Stenosarchaea group</taxon>
        <taxon>Methanomicrobia</taxon>
        <taxon>Methanosarcinales</taxon>
        <taxon>Methanosarcinaceae</taxon>
        <taxon>Methanosarcina</taxon>
    </lineage>
</organism>
<protein>
    <recommendedName>
        <fullName>Elongation factor 2</fullName>
        <shortName>EF-2</shortName>
    </recommendedName>
</protein>
<dbReference type="EMBL" id="AF026165">
    <property type="protein sequence ID" value="AAC79200.1"/>
    <property type="molecule type" value="Genomic_DNA"/>
</dbReference>
<dbReference type="PIR" id="T44246">
    <property type="entry name" value="T44246"/>
</dbReference>
<dbReference type="SMR" id="O93640"/>
<dbReference type="GO" id="GO:0005829">
    <property type="term" value="C:cytosol"/>
    <property type="evidence" value="ECO:0007669"/>
    <property type="project" value="TreeGrafter"/>
</dbReference>
<dbReference type="GO" id="GO:1990904">
    <property type="term" value="C:ribonucleoprotein complex"/>
    <property type="evidence" value="ECO:0007669"/>
    <property type="project" value="TreeGrafter"/>
</dbReference>
<dbReference type="GO" id="GO:0005525">
    <property type="term" value="F:GTP binding"/>
    <property type="evidence" value="ECO:0007669"/>
    <property type="project" value="UniProtKB-UniRule"/>
</dbReference>
<dbReference type="GO" id="GO:0003924">
    <property type="term" value="F:GTPase activity"/>
    <property type="evidence" value="ECO:0007669"/>
    <property type="project" value="InterPro"/>
</dbReference>
<dbReference type="GO" id="GO:0003746">
    <property type="term" value="F:translation elongation factor activity"/>
    <property type="evidence" value="ECO:0007669"/>
    <property type="project" value="UniProtKB-UniRule"/>
</dbReference>
<dbReference type="CDD" id="cd01681">
    <property type="entry name" value="aeEF2_snRNP_like_IV"/>
    <property type="match status" value="1"/>
</dbReference>
<dbReference type="CDD" id="cd16268">
    <property type="entry name" value="EF2_II"/>
    <property type="match status" value="1"/>
</dbReference>
<dbReference type="CDD" id="cd16261">
    <property type="entry name" value="EF2_snRNP_III"/>
    <property type="match status" value="1"/>
</dbReference>
<dbReference type="CDD" id="cd01514">
    <property type="entry name" value="Elongation_Factor_C"/>
    <property type="match status" value="1"/>
</dbReference>
<dbReference type="FunFam" id="3.30.230.10:FF:000009">
    <property type="entry name" value="116 kDa U5 small nuclear ribonucleoprotein component"/>
    <property type="match status" value="1"/>
</dbReference>
<dbReference type="FunFam" id="2.40.30.10:FF:000110">
    <property type="entry name" value="Elongation factor 2"/>
    <property type="match status" value="1"/>
</dbReference>
<dbReference type="FunFam" id="3.30.70.240:FF:000010">
    <property type="entry name" value="Elongation factor 2"/>
    <property type="match status" value="1"/>
</dbReference>
<dbReference type="FunFam" id="3.40.50.300:FF:000684">
    <property type="entry name" value="Elongation factor 2"/>
    <property type="match status" value="1"/>
</dbReference>
<dbReference type="FunFam" id="3.30.70.870:FF:000002">
    <property type="entry name" value="Translation elongation factor 2"/>
    <property type="match status" value="1"/>
</dbReference>
<dbReference type="Gene3D" id="3.30.230.10">
    <property type="match status" value="1"/>
</dbReference>
<dbReference type="Gene3D" id="3.30.70.240">
    <property type="match status" value="1"/>
</dbReference>
<dbReference type="Gene3D" id="3.30.70.870">
    <property type="entry name" value="Elongation Factor G (Translational Gtpase), domain 3"/>
    <property type="match status" value="1"/>
</dbReference>
<dbReference type="Gene3D" id="3.40.50.300">
    <property type="entry name" value="P-loop containing nucleotide triphosphate hydrolases"/>
    <property type="match status" value="1"/>
</dbReference>
<dbReference type="Gene3D" id="2.40.30.10">
    <property type="entry name" value="Translation factors"/>
    <property type="match status" value="1"/>
</dbReference>
<dbReference type="HAMAP" id="MF_00054_A">
    <property type="entry name" value="EF_G_EF_2_A"/>
    <property type="match status" value="1"/>
</dbReference>
<dbReference type="InterPro" id="IPR041095">
    <property type="entry name" value="EFG_II"/>
</dbReference>
<dbReference type="InterPro" id="IPR035647">
    <property type="entry name" value="EFG_III/V"/>
</dbReference>
<dbReference type="InterPro" id="IPR000640">
    <property type="entry name" value="EFG_V-like"/>
</dbReference>
<dbReference type="InterPro" id="IPR004161">
    <property type="entry name" value="EFTu-like_2"/>
</dbReference>
<dbReference type="InterPro" id="IPR031157">
    <property type="entry name" value="G_TR_CS"/>
</dbReference>
<dbReference type="InterPro" id="IPR027417">
    <property type="entry name" value="P-loop_NTPase"/>
</dbReference>
<dbReference type="InterPro" id="IPR020568">
    <property type="entry name" value="Ribosomal_Su5_D2-typ_SF"/>
</dbReference>
<dbReference type="InterPro" id="IPR014721">
    <property type="entry name" value="Ribsml_uS5_D2-typ_fold_subgr"/>
</dbReference>
<dbReference type="InterPro" id="IPR005225">
    <property type="entry name" value="Small_GTP-bd"/>
</dbReference>
<dbReference type="InterPro" id="IPR000795">
    <property type="entry name" value="T_Tr_GTP-bd_dom"/>
</dbReference>
<dbReference type="InterPro" id="IPR009000">
    <property type="entry name" value="Transl_B-barrel_sf"/>
</dbReference>
<dbReference type="InterPro" id="IPR004543">
    <property type="entry name" value="Transl_elong_EFG/EF2_arc"/>
</dbReference>
<dbReference type="InterPro" id="IPR005517">
    <property type="entry name" value="Transl_elong_EFG/EF2_IV"/>
</dbReference>
<dbReference type="NCBIfam" id="TIGR00490">
    <property type="entry name" value="aEF-2"/>
    <property type="match status" value="1"/>
</dbReference>
<dbReference type="NCBIfam" id="TIGR00231">
    <property type="entry name" value="small_GTP"/>
    <property type="match status" value="1"/>
</dbReference>
<dbReference type="PANTHER" id="PTHR42908:SF3">
    <property type="entry name" value="ELONGATION FACTOR-LIKE GTPASE 1"/>
    <property type="match status" value="1"/>
</dbReference>
<dbReference type="PANTHER" id="PTHR42908">
    <property type="entry name" value="TRANSLATION ELONGATION FACTOR-RELATED"/>
    <property type="match status" value="1"/>
</dbReference>
<dbReference type="Pfam" id="PF00679">
    <property type="entry name" value="EFG_C"/>
    <property type="match status" value="1"/>
</dbReference>
<dbReference type="Pfam" id="PF14492">
    <property type="entry name" value="EFG_III"/>
    <property type="match status" value="1"/>
</dbReference>
<dbReference type="Pfam" id="PF03764">
    <property type="entry name" value="EFG_IV"/>
    <property type="match status" value="1"/>
</dbReference>
<dbReference type="Pfam" id="PF00009">
    <property type="entry name" value="GTP_EFTU"/>
    <property type="match status" value="1"/>
</dbReference>
<dbReference type="Pfam" id="PF03144">
    <property type="entry name" value="GTP_EFTU_D2"/>
    <property type="match status" value="1"/>
</dbReference>
<dbReference type="PRINTS" id="PR00315">
    <property type="entry name" value="ELONGATNFCT"/>
</dbReference>
<dbReference type="SMART" id="SM00838">
    <property type="entry name" value="EFG_C"/>
    <property type="match status" value="1"/>
</dbReference>
<dbReference type="SMART" id="SM00889">
    <property type="entry name" value="EFG_IV"/>
    <property type="match status" value="1"/>
</dbReference>
<dbReference type="SUPFAM" id="SSF54980">
    <property type="entry name" value="EF-G C-terminal domain-like"/>
    <property type="match status" value="2"/>
</dbReference>
<dbReference type="SUPFAM" id="SSF52540">
    <property type="entry name" value="P-loop containing nucleoside triphosphate hydrolases"/>
    <property type="match status" value="1"/>
</dbReference>
<dbReference type="SUPFAM" id="SSF54211">
    <property type="entry name" value="Ribosomal protein S5 domain 2-like"/>
    <property type="match status" value="1"/>
</dbReference>
<dbReference type="SUPFAM" id="SSF50447">
    <property type="entry name" value="Translation proteins"/>
    <property type="match status" value="1"/>
</dbReference>
<dbReference type="PROSITE" id="PS00301">
    <property type="entry name" value="G_TR_1"/>
    <property type="match status" value="1"/>
</dbReference>
<dbReference type="PROSITE" id="PS51722">
    <property type="entry name" value="G_TR_2"/>
    <property type="match status" value="1"/>
</dbReference>
<reference key="1">
    <citation type="journal article" date="1998" name="FEBS Lett.">
        <title>Archaeal cold-adapted proteins: structural and evolutionary analysis of the elongation factor 2 proteins from psychrophilic, mesophilic and thermophilic methanogens.</title>
        <authorList>
            <person name="Thomas T."/>
            <person name="Cavicchioli R."/>
        </authorList>
    </citation>
    <scope>NUCLEOTIDE SEQUENCE [GENOMIC DNA]</scope>
    <source>
        <strain>ATCC 43570 / DSM 1825 / OCM 12 / TM-1</strain>
    </source>
</reference>
<proteinExistence type="inferred from homology"/>
<comment type="function">
    <text evidence="1">Catalyzes the GTP-dependent ribosomal translocation step during translation elongation. During this step, the ribosome changes from the pre-translocational (PRE) to the post-translocational (POST) state as the newly formed A-site-bound peptidyl-tRNA and P-site-bound deacylated tRNA move to the P and E sites, respectively. Catalyzes the coordinated movement of the two tRNA molecules, the mRNA and conformational changes in the ribosome (By similarity).</text>
</comment>
<comment type="subcellular location">
    <subcellularLocation>
        <location evidence="1">Cytoplasm</location>
    </subcellularLocation>
</comment>
<comment type="similarity">
    <text evidence="2">Belongs to the TRAFAC class translation factor GTPase superfamily. Classic translation factor GTPase family. EF-G/EF-2 subfamily.</text>
</comment>
<name>EF2_METTE</name>
<accession>O93640</accession>
<gene>
    <name type="primary">fusA</name>
    <name type="synonym">fus</name>
</gene>